<feature type="chain" id="PRO_1000022539" description="Chorismate synthase">
    <location>
        <begin position="1"/>
        <end position="361"/>
    </location>
</feature>
<feature type="binding site" evidence="1">
    <location>
        <position position="48"/>
    </location>
    <ligand>
        <name>NADP(+)</name>
        <dbReference type="ChEBI" id="CHEBI:58349"/>
    </ligand>
</feature>
<feature type="binding site" evidence="1">
    <location>
        <position position="54"/>
    </location>
    <ligand>
        <name>NADP(+)</name>
        <dbReference type="ChEBI" id="CHEBI:58349"/>
    </ligand>
</feature>
<feature type="binding site" evidence="1">
    <location>
        <begin position="131"/>
        <end position="133"/>
    </location>
    <ligand>
        <name>FMN</name>
        <dbReference type="ChEBI" id="CHEBI:58210"/>
    </ligand>
</feature>
<feature type="binding site" evidence="1">
    <location>
        <begin position="243"/>
        <end position="244"/>
    </location>
    <ligand>
        <name>FMN</name>
        <dbReference type="ChEBI" id="CHEBI:58210"/>
    </ligand>
</feature>
<feature type="binding site" evidence="1">
    <location>
        <position position="287"/>
    </location>
    <ligand>
        <name>FMN</name>
        <dbReference type="ChEBI" id="CHEBI:58210"/>
    </ligand>
</feature>
<feature type="binding site" evidence="1">
    <location>
        <begin position="302"/>
        <end position="306"/>
    </location>
    <ligand>
        <name>FMN</name>
        <dbReference type="ChEBI" id="CHEBI:58210"/>
    </ligand>
</feature>
<feature type="binding site" evidence="1">
    <location>
        <position position="328"/>
    </location>
    <ligand>
        <name>FMN</name>
        <dbReference type="ChEBI" id="CHEBI:58210"/>
    </ligand>
</feature>
<protein>
    <recommendedName>
        <fullName evidence="1">Chorismate synthase</fullName>
        <shortName evidence="1">CS</shortName>
        <ecNumber evidence="1">4.2.3.5</ecNumber>
    </recommendedName>
    <alternativeName>
        <fullName evidence="1">5-enolpyruvylshikimate-3-phosphate phospholyase</fullName>
    </alternativeName>
</protein>
<gene>
    <name evidence="1" type="primary">aroC</name>
    <name type="ordered locus">RPD_1314</name>
</gene>
<dbReference type="EC" id="4.2.3.5" evidence="1"/>
<dbReference type="EMBL" id="CP000283">
    <property type="protein sequence ID" value="ABE38552.1"/>
    <property type="molecule type" value="Genomic_DNA"/>
</dbReference>
<dbReference type="SMR" id="Q13BI7"/>
<dbReference type="STRING" id="316057.RPD_1314"/>
<dbReference type="KEGG" id="rpd:RPD_1314"/>
<dbReference type="eggNOG" id="COG0082">
    <property type="taxonomic scope" value="Bacteria"/>
</dbReference>
<dbReference type="HOGENOM" id="CLU_034547_0_0_5"/>
<dbReference type="BioCyc" id="RPAL316057:RPD_RS06655-MONOMER"/>
<dbReference type="UniPathway" id="UPA00053">
    <property type="reaction ID" value="UER00090"/>
</dbReference>
<dbReference type="Proteomes" id="UP000001818">
    <property type="component" value="Chromosome"/>
</dbReference>
<dbReference type="GO" id="GO:0005829">
    <property type="term" value="C:cytosol"/>
    <property type="evidence" value="ECO:0007669"/>
    <property type="project" value="TreeGrafter"/>
</dbReference>
<dbReference type="GO" id="GO:0004107">
    <property type="term" value="F:chorismate synthase activity"/>
    <property type="evidence" value="ECO:0007669"/>
    <property type="project" value="UniProtKB-UniRule"/>
</dbReference>
<dbReference type="GO" id="GO:0010181">
    <property type="term" value="F:FMN binding"/>
    <property type="evidence" value="ECO:0007669"/>
    <property type="project" value="TreeGrafter"/>
</dbReference>
<dbReference type="GO" id="GO:0008652">
    <property type="term" value="P:amino acid biosynthetic process"/>
    <property type="evidence" value="ECO:0007669"/>
    <property type="project" value="UniProtKB-KW"/>
</dbReference>
<dbReference type="GO" id="GO:0009073">
    <property type="term" value="P:aromatic amino acid family biosynthetic process"/>
    <property type="evidence" value="ECO:0007669"/>
    <property type="project" value="UniProtKB-KW"/>
</dbReference>
<dbReference type="GO" id="GO:0009423">
    <property type="term" value="P:chorismate biosynthetic process"/>
    <property type="evidence" value="ECO:0007669"/>
    <property type="project" value="UniProtKB-UniRule"/>
</dbReference>
<dbReference type="CDD" id="cd07304">
    <property type="entry name" value="Chorismate_synthase"/>
    <property type="match status" value="1"/>
</dbReference>
<dbReference type="Gene3D" id="3.60.150.10">
    <property type="entry name" value="Chorismate synthase AroC"/>
    <property type="match status" value="1"/>
</dbReference>
<dbReference type="HAMAP" id="MF_00300">
    <property type="entry name" value="Chorismate_synth"/>
    <property type="match status" value="1"/>
</dbReference>
<dbReference type="InterPro" id="IPR000453">
    <property type="entry name" value="Chorismate_synth"/>
</dbReference>
<dbReference type="InterPro" id="IPR035904">
    <property type="entry name" value="Chorismate_synth_AroC_sf"/>
</dbReference>
<dbReference type="InterPro" id="IPR020541">
    <property type="entry name" value="Chorismate_synthase_CS"/>
</dbReference>
<dbReference type="NCBIfam" id="TIGR00033">
    <property type="entry name" value="aroC"/>
    <property type="match status" value="1"/>
</dbReference>
<dbReference type="NCBIfam" id="NF003793">
    <property type="entry name" value="PRK05382.1"/>
    <property type="match status" value="1"/>
</dbReference>
<dbReference type="PANTHER" id="PTHR21085">
    <property type="entry name" value="CHORISMATE SYNTHASE"/>
    <property type="match status" value="1"/>
</dbReference>
<dbReference type="PANTHER" id="PTHR21085:SF0">
    <property type="entry name" value="CHORISMATE SYNTHASE"/>
    <property type="match status" value="1"/>
</dbReference>
<dbReference type="Pfam" id="PF01264">
    <property type="entry name" value="Chorismate_synt"/>
    <property type="match status" value="1"/>
</dbReference>
<dbReference type="PIRSF" id="PIRSF001456">
    <property type="entry name" value="Chorismate_synth"/>
    <property type="match status" value="1"/>
</dbReference>
<dbReference type="SUPFAM" id="SSF103263">
    <property type="entry name" value="Chorismate synthase, AroC"/>
    <property type="match status" value="1"/>
</dbReference>
<dbReference type="PROSITE" id="PS00787">
    <property type="entry name" value="CHORISMATE_SYNTHASE_1"/>
    <property type="match status" value="1"/>
</dbReference>
<dbReference type="PROSITE" id="PS00788">
    <property type="entry name" value="CHORISMATE_SYNTHASE_2"/>
    <property type="match status" value="1"/>
</dbReference>
<dbReference type="PROSITE" id="PS00789">
    <property type="entry name" value="CHORISMATE_SYNTHASE_3"/>
    <property type="match status" value="1"/>
</dbReference>
<accession>Q13BI7</accession>
<organism>
    <name type="scientific">Rhodopseudomonas palustris (strain BisB5)</name>
    <dbReference type="NCBI Taxonomy" id="316057"/>
    <lineage>
        <taxon>Bacteria</taxon>
        <taxon>Pseudomonadati</taxon>
        <taxon>Pseudomonadota</taxon>
        <taxon>Alphaproteobacteria</taxon>
        <taxon>Hyphomicrobiales</taxon>
        <taxon>Nitrobacteraceae</taxon>
        <taxon>Rhodopseudomonas</taxon>
    </lineage>
</organism>
<comment type="function">
    <text evidence="1">Catalyzes the anti-1,4-elimination of the C-3 phosphate and the C-6 proR hydrogen from 5-enolpyruvylshikimate-3-phosphate (EPSP) to yield chorismate, which is the branch point compound that serves as the starting substrate for the three terminal pathways of aromatic amino acid biosynthesis. This reaction introduces a second double bond into the aromatic ring system.</text>
</comment>
<comment type="catalytic activity">
    <reaction evidence="1">
        <text>5-O-(1-carboxyvinyl)-3-phosphoshikimate = chorismate + phosphate</text>
        <dbReference type="Rhea" id="RHEA:21020"/>
        <dbReference type="ChEBI" id="CHEBI:29748"/>
        <dbReference type="ChEBI" id="CHEBI:43474"/>
        <dbReference type="ChEBI" id="CHEBI:57701"/>
        <dbReference type="EC" id="4.2.3.5"/>
    </reaction>
</comment>
<comment type="cofactor">
    <cofactor evidence="1">
        <name>FMNH2</name>
        <dbReference type="ChEBI" id="CHEBI:57618"/>
    </cofactor>
    <text evidence="1">Reduced FMN (FMNH(2)).</text>
</comment>
<comment type="pathway">
    <text evidence="1">Metabolic intermediate biosynthesis; chorismate biosynthesis; chorismate from D-erythrose 4-phosphate and phosphoenolpyruvate: step 7/7.</text>
</comment>
<comment type="subunit">
    <text evidence="1">Homotetramer.</text>
</comment>
<comment type="similarity">
    <text evidence="1">Belongs to the chorismate synthase family.</text>
</comment>
<evidence type="ECO:0000255" key="1">
    <source>
        <dbReference type="HAMAP-Rule" id="MF_00300"/>
    </source>
</evidence>
<proteinExistence type="inferred from homology"/>
<reference key="1">
    <citation type="submission" date="2006-03" db="EMBL/GenBank/DDBJ databases">
        <title>Complete sequence of Rhodopseudomonas palustris BisB5.</title>
        <authorList>
            <consortium name="US DOE Joint Genome Institute"/>
            <person name="Copeland A."/>
            <person name="Lucas S."/>
            <person name="Lapidus A."/>
            <person name="Barry K."/>
            <person name="Detter J.C."/>
            <person name="Glavina del Rio T."/>
            <person name="Hammon N."/>
            <person name="Israni S."/>
            <person name="Dalin E."/>
            <person name="Tice H."/>
            <person name="Pitluck S."/>
            <person name="Chain P."/>
            <person name="Malfatti S."/>
            <person name="Shin M."/>
            <person name="Vergez L."/>
            <person name="Schmutz J."/>
            <person name="Larimer F."/>
            <person name="Land M."/>
            <person name="Hauser L."/>
            <person name="Pelletier D.A."/>
            <person name="Kyrpides N."/>
            <person name="Lykidis A."/>
            <person name="Oda Y."/>
            <person name="Harwood C.S."/>
            <person name="Richardson P."/>
        </authorList>
    </citation>
    <scope>NUCLEOTIDE SEQUENCE [LARGE SCALE GENOMIC DNA]</scope>
    <source>
        <strain>BisB5</strain>
    </source>
</reference>
<keyword id="KW-0028">Amino-acid biosynthesis</keyword>
<keyword id="KW-0057">Aromatic amino acid biosynthesis</keyword>
<keyword id="KW-0274">FAD</keyword>
<keyword id="KW-0285">Flavoprotein</keyword>
<keyword id="KW-0288">FMN</keyword>
<keyword id="KW-0456">Lyase</keyword>
<keyword id="KW-0521">NADP</keyword>
<sequence>MSFNTFGHMFRVTTFGESHGVAIGCVVDGCPPLIPLTEADIQGDLDRRRPGQSRFTTQRQEADQVKIVSGVMAHPESGAQVTTGTPIALMIENTDQRSKDYSDIKDKYRPGHADFTYEAKYGIRDYRGGGRSSARETASRVAAGAIARKVITGMSVRGALVQIGPHKIDREKWDWDEIGNNPFFCPDKDAASVWEAYLDGIRKSGSSIGAVIEVIAEGVPAGLGAPIYAKLDGDIAAALMSINAVKGVEIGDGFATAALTGEENADEMRMGNHGPAFLSNHAGGILGGISTGQPVVARFAVKPTSSILSPRRTVDREGHDTDILTKGRHDPCVGIRAVPVGEAMVACVLADHLLRHRGQVG</sequence>
<name>AROC_RHOPS</name>